<sequence>GALGDRNGDCACDRPSPRGYWGGGMTGRSAFADPHIAEGRLANQDARLGTLEEEVDKLQHKYDDFIAGKTARRERFAQLKDRVWGLEAHHCDDDHLSCKDVAFTCIGHNLVCDGHKDCLNGHDEDEETCSIAASVGSSFEGQIRQLDTCTKRKPSAFRFIITNVDVPKYFPQEPHVKATILMTSSKDGHETQSSLAVDGVYDFTHRKVILYSPDKDNLIFECTFPRHDNNHCKGVMKHSGGDVCLTFTLERID</sequence>
<organism>
    <name type="scientific">Tylorrhynchus heterochetus</name>
    <name type="common">Japanese palolo worm</name>
    <name type="synonym">Nereis heterochaeta</name>
    <dbReference type="NCBI Taxonomy" id="3228785"/>
    <lineage>
        <taxon>Eukaryota</taxon>
        <taxon>Metazoa</taxon>
        <taxon>Spiralia</taxon>
        <taxon>Lophotrochozoa</taxon>
        <taxon>Annelida</taxon>
        <taxon>Polychaeta</taxon>
        <taxon>Errantia</taxon>
        <taxon>Phyllodocida</taxon>
        <taxon>Nereididae</taxon>
        <taxon>Tylorrhynchus</taxon>
    </lineage>
</organism>
<reference key="1">
    <citation type="journal article" date="1990" name="J. Biol. Chem.">
        <title>Primary structure of two linker chains of the extracellular hemoglobin from the polychaete Tylorrhynchus heterochaetus.</title>
        <authorList>
            <person name="Suzuki T."/>
            <person name="Takagi T."/>
            <person name="Gotoh T."/>
        </authorList>
    </citation>
    <scope>PROTEIN SEQUENCE</scope>
</reference>
<keyword id="KW-0903">Direct protein sequencing</keyword>
<keyword id="KW-1015">Disulfide bond</keyword>
<keyword id="KW-0561">Oxygen transport</keyword>
<keyword id="KW-0813">Transport</keyword>
<comment type="function">
    <text>Acts as a linker for the assembly of heme-containing chains in the construction of giant hemoglobin.</text>
</comment>
<comment type="subunit">
    <text>Disulfide-linked dimer of identical chains. A model is proposed for the subunit structure of the Tylorrhynchus hemoglobin, consisting of 216 polypeptide chains, 192 heme-containing chains, and 24 linker chains.</text>
</comment>
<feature type="chain" id="PRO_0000087501" description="Giant extracellular hemoglobin linker 1 chain">
    <location>
        <begin position="1"/>
        <end position="253"/>
    </location>
</feature>
<feature type="domain" description="LDL-receptor class A" evidence="1">
    <location>
        <begin position="89"/>
        <end position="131"/>
    </location>
</feature>
<feature type="disulfide bond" evidence="1">
    <location>
        <begin position="91"/>
        <end position="105"/>
    </location>
</feature>
<feature type="disulfide bond" evidence="1">
    <location>
        <begin position="98"/>
        <end position="118"/>
    </location>
</feature>
<feature type="disulfide bond" evidence="1">
    <location>
        <begin position="112"/>
        <end position="129"/>
    </location>
</feature>
<accession>P18207</accession>
<proteinExistence type="evidence at protein level"/>
<evidence type="ECO:0000255" key="1">
    <source>
        <dbReference type="PROSITE-ProRule" id="PRU00124"/>
    </source>
</evidence>
<dbReference type="PIR" id="A36564">
    <property type="entry name" value="A36564"/>
</dbReference>
<dbReference type="SMR" id="P18207"/>
<dbReference type="GO" id="GO:0005344">
    <property type="term" value="F:oxygen carrier activity"/>
    <property type="evidence" value="ECO:0007669"/>
    <property type="project" value="UniProtKB-KW"/>
</dbReference>
<dbReference type="CDD" id="cd11673">
    <property type="entry name" value="hemoglobin_linker_C"/>
    <property type="match status" value="1"/>
</dbReference>
<dbReference type="CDD" id="cd00112">
    <property type="entry name" value="LDLa"/>
    <property type="match status" value="1"/>
</dbReference>
<dbReference type="Gene3D" id="2.40.128.620">
    <property type="match status" value="1"/>
</dbReference>
<dbReference type="InterPro" id="IPR031639">
    <property type="entry name" value="Eryth_link_C"/>
</dbReference>
<dbReference type="InterPro" id="IPR036153">
    <property type="entry name" value="Eryth_link_C_sf"/>
</dbReference>
<dbReference type="InterPro" id="IPR036055">
    <property type="entry name" value="LDL_receptor-like_sf"/>
</dbReference>
<dbReference type="InterPro" id="IPR023415">
    <property type="entry name" value="LDLR_class-A_CS"/>
</dbReference>
<dbReference type="InterPro" id="IPR002172">
    <property type="entry name" value="LDrepeatLR_classA_rpt"/>
</dbReference>
<dbReference type="Pfam" id="PF16915">
    <property type="entry name" value="Eryth_link_C"/>
    <property type="match status" value="1"/>
</dbReference>
<dbReference type="SMART" id="SM00192">
    <property type="entry name" value="LDLa"/>
    <property type="match status" value="1"/>
</dbReference>
<dbReference type="SUPFAM" id="SSF141480">
    <property type="entry name" value="Extracellular hemoglobin linker subunit, receptor domain"/>
    <property type="match status" value="1"/>
</dbReference>
<dbReference type="SUPFAM" id="SSF57424">
    <property type="entry name" value="LDL receptor-like module"/>
    <property type="match status" value="1"/>
</dbReference>
<dbReference type="PROSITE" id="PS01209">
    <property type="entry name" value="LDLRA_1"/>
    <property type="match status" value="1"/>
</dbReference>
<dbReference type="PROSITE" id="PS50068">
    <property type="entry name" value="LDLRA_2"/>
    <property type="match status" value="1"/>
</dbReference>
<name>GLBL_TYLHE</name>
<protein>
    <recommendedName>
        <fullName>Giant extracellular hemoglobin linker 1 chain</fullName>
    </recommendedName>
</protein>